<comment type="caution">
    <text evidence="2">Product of a dubious CDS prediction.</text>
</comment>
<keyword id="KW-1185">Reference proteome</keyword>
<protein>
    <recommendedName>
        <fullName>Putative uncharacterized protein FLJ45999</fullName>
    </recommendedName>
</protein>
<organism>
    <name type="scientific">Homo sapiens</name>
    <name type="common">Human</name>
    <dbReference type="NCBI Taxonomy" id="9606"/>
    <lineage>
        <taxon>Eukaryota</taxon>
        <taxon>Metazoa</taxon>
        <taxon>Chordata</taxon>
        <taxon>Craniata</taxon>
        <taxon>Vertebrata</taxon>
        <taxon>Euteleostomi</taxon>
        <taxon>Mammalia</taxon>
        <taxon>Eutheria</taxon>
        <taxon>Euarchontoglires</taxon>
        <taxon>Primates</taxon>
        <taxon>Haplorrhini</taxon>
        <taxon>Catarrhini</taxon>
        <taxon>Hominidae</taxon>
        <taxon>Homo</taxon>
    </lineage>
</organism>
<name>YL004_HUMAN</name>
<feature type="chain" id="PRO_0000332192" description="Putative uncharacterized protein FLJ45999">
    <location>
        <begin position="1"/>
        <end position="168"/>
    </location>
</feature>
<feature type="region of interest" description="Disordered" evidence="1">
    <location>
        <begin position="1"/>
        <end position="23"/>
    </location>
</feature>
<feature type="region of interest" description="Disordered" evidence="1">
    <location>
        <begin position="117"/>
        <end position="143"/>
    </location>
</feature>
<feature type="compositionally biased region" description="Pro residues" evidence="1">
    <location>
        <begin position="1"/>
        <end position="10"/>
    </location>
</feature>
<evidence type="ECO:0000256" key="1">
    <source>
        <dbReference type="SAM" id="MobiDB-lite"/>
    </source>
</evidence>
<evidence type="ECO:0000305" key="2"/>
<sequence length="168" mass="18969">MSPTTGPQPNPRAWECHHTTGPQPNPRAWECHRMKGPQPNPRAWECHLRRVHNLTPEPGNVTIRGVHILTPEPGNVTIRGVHNLTPEPGNVTERGVHNLTPEPGNVTERGVHNLIPEPGNVTVKRGPQPNPRAWECHRTRGPQPNPRAWECHRTRGPQPNPRAWECHR</sequence>
<reference key="1">
    <citation type="journal article" date="2004" name="Nat. Genet.">
        <title>Complete sequencing and characterization of 21,243 full-length human cDNAs.</title>
        <authorList>
            <person name="Ota T."/>
            <person name="Suzuki Y."/>
            <person name="Nishikawa T."/>
            <person name="Otsuki T."/>
            <person name="Sugiyama T."/>
            <person name="Irie R."/>
            <person name="Wakamatsu A."/>
            <person name="Hayashi K."/>
            <person name="Sato H."/>
            <person name="Nagai K."/>
            <person name="Kimura K."/>
            <person name="Makita H."/>
            <person name="Sekine M."/>
            <person name="Obayashi M."/>
            <person name="Nishi T."/>
            <person name="Shibahara T."/>
            <person name="Tanaka T."/>
            <person name="Ishii S."/>
            <person name="Yamamoto J."/>
            <person name="Saito K."/>
            <person name="Kawai Y."/>
            <person name="Isono Y."/>
            <person name="Nakamura Y."/>
            <person name="Nagahari K."/>
            <person name="Murakami K."/>
            <person name="Yasuda T."/>
            <person name="Iwayanagi T."/>
            <person name="Wagatsuma M."/>
            <person name="Shiratori A."/>
            <person name="Sudo H."/>
            <person name="Hosoiri T."/>
            <person name="Kaku Y."/>
            <person name="Kodaira H."/>
            <person name="Kondo H."/>
            <person name="Sugawara M."/>
            <person name="Takahashi M."/>
            <person name="Kanda K."/>
            <person name="Yokoi T."/>
            <person name="Furuya T."/>
            <person name="Kikkawa E."/>
            <person name="Omura Y."/>
            <person name="Abe K."/>
            <person name="Kamihara K."/>
            <person name="Katsuta N."/>
            <person name="Sato K."/>
            <person name="Tanikawa M."/>
            <person name="Yamazaki M."/>
            <person name="Ninomiya K."/>
            <person name="Ishibashi T."/>
            <person name="Yamashita H."/>
            <person name="Murakawa K."/>
            <person name="Fujimori K."/>
            <person name="Tanai H."/>
            <person name="Kimata M."/>
            <person name="Watanabe M."/>
            <person name="Hiraoka S."/>
            <person name="Chiba Y."/>
            <person name="Ishida S."/>
            <person name="Ono Y."/>
            <person name="Takiguchi S."/>
            <person name="Watanabe S."/>
            <person name="Yosida M."/>
            <person name="Hotuta T."/>
            <person name="Kusano J."/>
            <person name="Kanehori K."/>
            <person name="Takahashi-Fujii A."/>
            <person name="Hara H."/>
            <person name="Tanase T.-O."/>
            <person name="Nomura Y."/>
            <person name="Togiya S."/>
            <person name="Komai F."/>
            <person name="Hara R."/>
            <person name="Takeuchi K."/>
            <person name="Arita M."/>
            <person name="Imose N."/>
            <person name="Musashino K."/>
            <person name="Yuuki H."/>
            <person name="Oshima A."/>
            <person name="Sasaki N."/>
            <person name="Aotsuka S."/>
            <person name="Yoshikawa Y."/>
            <person name="Matsunawa H."/>
            <person name="Ichihara T."/>
            <person name="Shiohata N."/>
            <person name="Sano S."/>
            <person name="Moriya S."/>
            <person name="Momiyama H."/>
            <person name="Satoh N."/>
            <person name="Takami S."/>
            <person name="Terashima Y."/>
            <person name="Suzuki O."/>
            <person name="Nakagawa S."/>
            <person name="Senoh A."/>
            <person name="Mizoguchi H."/>
            <person name="Goto Y."/>
            <person name="Shimizu F."/>
            <person name="Wakebe H."/>
            <person name="Hishigaki H."/>
            <person name="Watanabe T."/>
            <person name="Sugiyama A."/>
            <person name="Takemoto M."/>
            <person name="Kawakami B."/>
            <person name="Yamazaki M."/>
            <person name="Watanabe K."/>
            <person name="Kumagai A."/>
            <person name="Itakura S."/>
            <person name="Fukuzumi Y."/>
            <person name="Fujimori Y."/>
            <person name="Komiyama M."/>
            <person name="Tashiro H."/>
            <person name="Tanigami A."/>
            <person name="Fujiwara T."/>
            <person name="Ono T."/>
            <person name="Yamada K."/>
            <person name="Fujii Y."/>
            <person name="Ozaki K."/>
            <person name="Hirao M."/>
            <person name="Ohmori Y."/>
            <person name="Kawabata A."/>
            <person name="Hikiji T."/>
            <person name="Kobatake N."/>
            <person name="Inagaki H."/>
            <person name="Ikema Y."/>
            <person name="Okamoto S."/>
            <person name="Okitani R."/>
            <person name="Kawakami T."/>
            <person name="Noguchi S."/>
            <person name="Itoh T."/>
            <person name="Shigeta K."/>
            <person name="Senba T."/>
            <person name="Matsumura K."/>
            <person name="Nakajima Y."/>
            <person name="Mizuno T."/>
            <person name="Morinaga M."/>
            <person name="Sasaki M."/>
            <person name="Togashi T."/>
            <person name="Oyama M."/>
            <person name="Hata H."/>
            <person name="Watanabe M."/>
            <person name="Komatsu T."/>
            <person name="Mizushima-Sugano J."/>
            <person name="Satoh T."/>
            <person name="Shirai Y."/>
            <person name="Takahashi Y."/>
            <person name="Nakagawa K."/>
            <person name="Okumura K."/>
            <person name="Nagase T."/>
            <person name="Nomura N."/>
            <person name="Kikuchi H."/>
            <person name="Masuho Y."/>
            <person name="Yamashita R."/>
            <person name="Nakai K."/>
            <person name="Yada T."/>
            <person name="Nakamura Y."/>
            <person name="Ohara O."/>
            <person name="Isogai T."/>
            <person name="Sugano S."/>
        </authorList>
    </citation>
    <scope>NUCLEOTIDE SEQUENCE [LARGE SCALE MRNA]</scope>
    <source>
        <tissue>Small intestine</tissue>
    </source>
</reference>
<accession>Q6ZRX8</accession>
<proteinExistence type="uncertain"/>
<dbReference type="EMBL" id="AK127893">
    <property type="status" value="NOT_ANNOTATED_CDS"/>
    <property type="molecule type" value="mRNA"/>
</dbReference>
<dbReference type="IntAct" id="Q6ZRX8">
    <property type="interactions" value="2"/>
</dbReference>
<dbReference type="MINT" id="Q6ZRX8"/>
<dbReference type="BioMuta" id="-"/>
<dbReference type="MassIVE" id="Q6ZRX8"/>
<dbReference type="neXtProt" id="NX_Q6ZRX8"/>
<dbReference type="InParanoid" id="Q6ZRX8"/>
<dbReference type="PAN-GO" id="Q6ZRX8">
    <property type="GO annotations" value="0 GO annotations based on evolutionary models"/>
</dbReference>
<dbReference type="PhylomeDB" id="Q6ZRX8"/>
<dbReference type="PathwayCommons" id="Q6ZRX8"/>
<dbReference type="Pharos" id="Q6ZRX8">
    <property type="development level" value="Tdark"/>
</dbReference>
<dbReference type="Proteomes" id="UP000005640">
    <property type="component" value="Unplaced"/>
</dbReference>
<dbReference type="RNAct" id="Q6ZRX8">
    <property type="molecule type" value="protein"/>
</dbReference>